<evidence type="ECO:0000255" key="1">
    <source>
        <dbReference type="HAMAP-Rule" id="MF_00382"/>
    </source>
</evidence>
<evidence type="ECO:0000305" key="2"/>
<proteinExistence type="inferred from homology"/>
<organism>
    <name type="scientific">Burkholderia vietnamiensis (strain G4 / LMG 22486)</name>
    <name type="common">Burkholderia cepacia (strain R1808)</name>
    <dbReference type="NCBI Taxonomy" id="269482"/>
    <lineage>
        <taxon>Bacteria</taxon>
        <taxon>Pseudomonadati</taxon>
        <taxon>Pseudomonadota</taxon>
        <taxon>Betaproteobacteria</taxon>
        <taxon>Burkholderiales</taxon>
        <taxon>Burkholderiaceae</taxon>
        <taxon>Burkholderia</taxon>
        <taxon>Burkholderia cepacia complex</taxon>
    </lineage>
</organism>
<accession>A4JDU7</accession>
<gene>
    <name evidence="1" type="primary">rplT</name>
    <name type="ordered locus">Bcep1808_1442</name>
</gene>
<feature type="chain" id="PRO_1000048944" description="Large ribosomal subunit protein bL20">
    <location>
        <begin position="1"/>
        <end position="119"/>
    </location>
</feature>
<name>RL20_BURVG</name>
<sequence length="119" mass="13644">MPRVKRGVTARARHKKIINLAKGYRGRRNNVYRIAKQAVMRAGQYAYRDRRNKKRVFRALWITRINAAVRQHDMTYSVFINGLKKASIELDRKVLADMAVFDKAAFAAIVKQVKAAVAA</sequence>
<keyword id="KW-0687">Ribonucleoprotein</keyword>
<keyword id="KW-0689">Ribosomal protein</keyword>
<keyword id="KW-0694">RNA-binding</keyword>
<keyword id="KW-0699">rRNA-binding</keyword>
<reference key="1">
    <citation type="submission" date="2007-03" db="EMBL/GenBank/DDBJ databases">
        <title>Complete sequence of chromosome 1 of Burkholderia vietnamiensis G4.</title>
        <authorList>
            <consortium name="US DOE Joint Genome Institute"/>
            <person name="Copeland A."/>
            <person name="Lucas S."/>
            <person name="Lapidus A."/>
            <person name="Barry K."/>
            <person name="Detter J.C."/>
            <person name="Glavina del Rio T."/>
            <person name="Hammon N."/>
            <person name="Israni S."/>
            <person name="Dalin E."/>
            <person name="Tice H."/>
            <person name="Pitluck S."/>
            <person name="Chain P."/>
            <person name="Malfatti S."/>
            <person name="Shin M."/>
            <person name="Vergez L."/>
            <person name="Schmutz J."/>
            <person name="Larimer F."/>
            <person name="Land M."/>
            <person name="Hauser L."/>
            <person name="Kyrpides N."/>
            <person name="Tiedje J."/>
            <person name="Richardson P."/>
        </authorList>
    </citation>
    <scope>NUCLEOTIDE SEQUENCE [LARGE SCALE GENOMIC DNA]</scope>
    <source>
        <strain>G4 / LMG 22486</strain>
    </source>
</reference>
<dbReference type="EMBL" id="CP000614">
    <property type="protein sequence ID" value="ABO54450.1"/>
    <property type="molecule type" value="Genomic_DNA"/>
</dbReference>
<dbReference type="SMR" id="A4JDU7"/>
<dbReference type="KEGG" id="bvi:Bcep1808_1442"/>
<dbReference type="eggNOG" id="COG0292">
    <property type="taxonomic scope" value="Bacteria"/>
</dbReference>
<dbReference type="HOGENOM" id="CLU_123265_0_1_4"/>
<dbReference type="Proteomes" id="UP000002287">
    <property type="component" value="Chromosome 1"/>
</dbReference>
<dbReference type="GO" id="GO:1990904">
    <property type="term" value="C:ribonucleoprotein complex"/>
    <property type="evidence" value="ECO:0007669"/>
    <property type="project" value="UniProtKB-KW"/>
</dbReference>
<dbReference type="GO" id="GO:0005840">
    <property type="term" value="C:ribosome"/>
    <property type="evidence" value="ECO:0007669"/>
    <property type="project" value="UniProtKB-KW"/>
</dbReference>
<dbReference type="GO" id="GO:0019843">
    <property type="term" value="F:rRNA binding"/>
    <property type="evidence" value="ECO:0007669"/>
    <property type="project" value="UniProtKB-UniRule"/>
</dbReference>
<dbReference type="GO" id="GO:0003735">
    <property type="term" value="F:structural constituent of ribosome"/>
    <property type="evidence" value="ECO:0007669"/>
    <property type="project" value="InterPro"/>
</dbReference>
<dbReference type="GO" id="GO:0000027">
    <property type="term" value="P:ribosomal large subunit assembly"/>
    <property type="evidence" value="ECO:0007669"/>
    <property type="project" value="UniProtKB-UniRule"/>
</dbReference>
<dbReference type="GO" id="GO:0006412">
    <property type="term" value="P:translation"/>
    <property type="evidence" value="ECO:0007669"/>
    <property type="project" value="InterPro"/>
</dbReference>
<dbReference type="CDD" id="cd07026">
    <property type="entry name" value="Ribosomal_L20"/>
    <property type="match status" value="1"/>
</dbReference>
<dbReference type="FunFam" id="1.10.1900.20:FF:000001">
    <property type="entry name" value="50S ribosomal protein L20"/>
    <property type="match status" value="1"/>
</dbReference>
<dbReference type="Gene3D" id="6.10.160.10">
    <property type="match status" value="1"/>
</dbReference>
<dbReference type="Gene3D" id="1.10.1900.20">
    <property type="entry name" value="Ribosomal protein L20"/>
    <property type="match status" value="1"/>
</dbReference>
<dbReference type="HAMAP" id="MF_00382">
    <property type="entry name" value="Ribosomal_bL20"/>
    <property type="match status" value="1"/>
</dbReference>
<dbReference type="InterPro" id="IPR005813">
    <property type="entry name" value="Ribosomal_bL20"/>
</dbReference>
<dbReference type="InterPro" id="IPR049946">
    <property type="entry name" value="RIBOSOMAL_L20_CS"/>
</dbReference>
<dbReference type="InterPro" id="IPR035566">
    <property type="entry name" value="Ribosomal_protein_bL20_C"/>
</dbReference>
<dbReference type="NCBIfam" id="TIGR01032">
    <property type="entry name" value="rplT_bact"/>
    <property type="match status" value="1"/>
</dbReference>
<dbReference type="PANTHER" id="PTHR10986">
    <property type="entry name" value="39S RIBOSOMAL PROTEIN L20"/>
    <property type="match status" value="1"/>
</dbReference>
<dbReference type="Pfam" id="PF00453">
    <property type="entry name" value="Ribosomal_L20"/>
    <property type="match status" value="1"/>
</dbReference>
<dbReference type="PRINTS" id="PR00062">
    <property type="entry name" value="RIBOSOMALL20"/>
</dbReference>
<dbReference type="SUPFAM" id="SSF74731">
    <property type="entry name" value="Ribosomal protein L20"/>
    <property type="match status" value="1"/>
</dbReference>
<dbReference type="PROSITE" id="PS00937">
    <property type="entry name" value="RIBOSOMAL_L20"/>
    <property type="match status" value="1"/>
</dbReference>
<protein>
    <recommendedName>
        <fullName evidence="1">Large ribosomal subunit protein bL20</fullName>
    </recommendedName>
    <alternativeName>
        <fullName evidence="2">50S ribosomal protein L20</fullName>
    </alternativeName>
</protein>
<comment type="function">
    <text evidence="1">Binds directly to 23S ribosomal RNA and is necessary for the in vitro assembly process of the 50S ribosomal subunit. It is not involved in the protein synthesizing functions of that subunit.</text>
</comment>
<comment type="similarity">
    <text evidence="1">Belongs to the bacterial ribosomal protein bL20 family.</text>
</comment>